<evidence type="ECO:0000250" key="1"/>
<evidence type="ECO:0000256" key="2">
    <source>
        <dbReference type="SAM" id="MobiDB-lite"/>
    </source>
</evidence>
<evidence type="ECO:0000305" key="3"/>
<name>SEN54_SCHPO</name>
<reference key="1">
    <citation type="journal article" date="2002" name="Nature">
        <title>The genome sequence of Schizosaccharomyces pombe.</title>
        <authorList>
            <person name="Wood V."/>
            <person name="Gwilliam R."/>
            <person name="Rajandream M.A."/>
            <person name="Lyne M.H."/>
            <person name="Lyne R."/>
            <person name="Stewart A."/>
            <person name="Sgouros J.G."/>
            <person name="Peat N."/>
            <person name="Hayles J."/>
            <person name="Baker S.G."/>
            <person name="Basham D."/>
            <person name="Bowman S."/>
            <person name="Brooks K."/>
            <person name="Brown D."/>
            <person name="Brown S."/>
            <person name="Chillingworth T."/>
            <person name="Churcher C.M."/>
            <person name="Collins M."/>
            <person name="Connor R."/>
            <person name="Cronin A."/>
            <person name="Davis P."/>
            <person name="Feltwell T."/>
            <person name="Fraser A."/>
            <person name="Gentles S."/>
            <person name="Goble A."/>
            <person name="Hamlin N."/>
            <person name="Harris D.E."/>
            <person name="Hidalgo J."/>
            <person name="Hodgson G."/>
            <person name="Holroyd S."/>
            <person name="Hornsby T."/>
            <person name="Howarth S."/>
            <person name="Huckle E.J."/>
            <person name="Hunt S."/>
            <person name="Jagels K."/>
            <person name="James K.D."/>
            <person name="Jones L."/>
            <person name="Jones M."/>
            <person name="Leather S."/>
            <person name="McDonald S."/>
            <person name="McLean J."/>
            <person name="Mooney P."/>
            <person name="Moule S."/>
            <person name="Mungall K.L."/>
            <person name="Murphy L.D."/>
            <person name="Niblett D."/>
            <person name="Odell C."/>
            <person name="Oliver K."/>
            <person name="O'Neil S."/>
            <person name="Pearson D."/>
            <person name="Quail M.A."/>
            <person name="Rabbinowitsch E."/>
            <person name="Rutherford K.M."/>
            <person name="Rutter S."/>
            <person name="Saunders D."/>
            <person name="Seeger K."/>
            <person name="Sharp S."/>
            <person name="Skelton J."/>
            <person name="Simmonds M.N."/>
            <person name="Squares R."/>
            <person name="Squares S."/>
            <person name="Stevens K."/>
            <person name="Taylor K."/>
            <person name="Taylor R.G."/>
            <person name="Tivey A."/>
            <person name="Walsh S.V."/>
            <person name="Warren T."/>
            <person name="Whitehead S."/>
            <person name="Woodward J.R."/>
            <person name="Volckaert G."/>
            <person name="Aert R."/>
            <person name="Robben J."/>
            <person name="Grymonprez B."/>
            <person name="Weltjens I."/>
            <person name="Vanstreels E."/>
            <person name="Rieger M."/>
            <person name="Schaefer M."/>
            <person name="Mueller-Auer S."/>
            <person name="Gabel C."/>
            <person name="Fuchs M."/>
            <person name="Duesterhoeft A."/>
            <person name="Fritzc C."/>
            <person name="Holzer E."/>
            <person name="Moestl D."/>
            <person name="Hilbert H."/>
            <person name="Borzym K."/>
            <person name="Langer I."/>
            <person name="Beck A."/>
            <person name="Lehrach H."/>
            <person name="Reinhardt R."/>
            <person name="Pohl T.M."/>
            <person name="Eger P."/>
            <person name="Zimmermann W."/>
            <person name="Wedler H."/>
            <person name="Wambutt R."/>
            <person name="Purnelle B."/>
            <person name="Goffeau A."/>
            <person name="Cadieu E."/>
            <person name="Dreano S."/>
            <person name="Gloux S."/>
            <person name="Lelaure V."/>
            <person name="Mottier S."/>
            <person name="Galibert F."/>
            <person name="Aves S.J."/>
            <person name="Xiang Z."/>
            <person name="Hunt C."/>
            <person name="Moore K."/>
            <person name="Hurst S.M."/>
            <person name="Lucas M."/>
            <person name="Rochet M."/>
            <person name="Gaillardin C."/>
            <person name="Tallada V.A."/>
            <person name="Garzon A."/>
            <person name="Thode G."/>
            <person name="Daga R.R."/>
            <person name="Cruzado L."/>
            <person name="Jimenez J."/>
            <person name="Sanchez M."/>
            <person name="del Rey F."/>
            <person name="Benito J."/>
            <person name="Dominguez A."/>
            <person name="Revuelta J.L."/>
            <person name="Moreno S."/>
            <person name="Armstrong J."/>
            <person name="Forsburg S.L."/>
            <person name="Cerutti L."/>
            <person name="Lowe T."/>
            <person name="McCombie W.R."/>
            <person name="Paulsen I."/>
            <person name="Potashkin J."/>
            <person name="Shpakovski G.V."/>
            <person name="Ussery D."/>
            <person name="Barrell B.G."/>
            <person name="Nurse P."/>
        </authorList>
    </citation>
    <scope>NUCLEOTIDE SEQUENCE [LARGE SCALE GENOMIC DNA]</scope>
    <source>
        <strain>972 / ATCC 24843</strain>
    </source>
</reference>
<sequence>MDAQDEDNPFTNLETTVDVTEEIQDWRFLSNVEKDQGTYTIPKRGQKDFEPDGTNKQHSALDLSRKAMFDALSVERLISAKHAIIATWNAQNGMSCVEKAHGPLFKTMGTADSQNRMWLLPEETLYLVERGSMECWSEEGLPMSLQAVYSASIPLCGSLENYLVYAHLRRCGFSVIRSNLVPVKEDEYRCDSKIMNFKDLLFLGLGKASQILQTFNFRKLAFPFSKRRRQSILLHDTFYTYEEVYHDLQIVRGYVPIACNLITSSDSLFQITFHAYKPSASFKKSALSEPDFRICVVSSQDTLLPTIFEIDALFSSTPLRQNMPQHMFQRLKEGYRNIIIAIVDYGVISYIRLSDVCFEEKVYTDFSKKGSKRKRVSKKFQQLV</sequence>
<gene>
    <name type="primary">sen54</name>
    <name type="ORF">SPCC613.09</name>
</gene>
<accession>O74908</accession>
<keyword id="KW-1185">Reference proteome</keyword>
<keyword id="KW-0819">tRNA processing</keyword>
<proteinExistence type="inferred from homology"/>
<dbReference type="EMBL" id="CU329672">
    <property type="protein sequence ID" value="CAA21061.1"/>
    <property type="molecule type" value="Genomic_DNA"/>
</dbReference>
<dbReference type="PIR" id="T41475">
    <property type="entry name" value="T41475"/>
</dbReference>
<dbReference type="RefSeq" id="NP_587697.1">
    <property type="nucleotide sequence ID" value="NM_001022692.2"/>
</dbReference>
<dbReference type="SMR" id="O74908"/>
<dbReference type="FunCoup" id="O74908">
    <property type="interactions" value="9"/>
</dbReference>
<dbReference type="STRING" id="284812.O74908"/>
<dbReference type="iPTMnet" id="O74908"/>
<dbReference type="PaxDb" id="4896-SPCC613.09.1"/>
<dbReference type="EnsemblFungi" id="SPCC613.09.1">
    <property type="protein sequence ID" value="SPCC613.09.1:pep"/>
    <property type="gene ID" value="SPCC613.09"/>
</dbReference>
<dbReference type="GeneID" id="2538979"/>
<dbReference type="KEGG" id="spo:2538979"/>
<dbReference type="PomBase" id="SPCC613.09">
    <property type="gene designation" value="sen54"/>
</dbReference>
<dbReference type="VEuPathDB" id="FungiDB:SPCC613.09"/>
<dbReference type="eggNOG" id="KOG4772">
    <property type="taxonomic scope" value="Eukaryota"/>
</dbReference>
<dbReference type="HOGENOM" id="CLU_028449_0_1_1"/>
<dbReference type="InParanoid" id="O74908"/>
<dbReference type="OMA" id="MYMRLRH"/>
<dbReference type="PhylomeDB" id="O74908"/>
<dbReference type="PRO" id="PR:O74908"/>
<dbReference type="Proteomes" id="UP000002485">
    <property type="component" value="Chromosome III"/>
</dbReference>
<dbReference type="GO" id="GO:0031966">
    <property type="term" value="C:mitochondrial membrane"/>
    <property type="evidence" value="ECO:0007005"/>
    <property type="project" value="PomBase"/>
</dbReference>
<dbReference type="GO" id="GO:0000214">
    <property type="term" value="C:tRNA-intron endonuclease complex"/>
    <property type="evidence" value="ECO:0000318"/>
    <property type="project" value="GO_Central"/>
</dbReference>
<dbReference type="GO" id="GO:0000379">
    <property type="term" value="P:tRNA-type intron splice site recognition and cleavage"/>
    <property type="evidence" value="ECO:0000318"/>
    <property type="project" value="GO_Central"/>
</dbReference>
<dbReference type="InterPro" id="IPR024337">
    <property type="entry name" value="tRNA_splic_suSen54"/>
</dbReference>
<dbReference type="InterPro" id="IPR024336">
    <property type="entry name" value="tRNA_splic_suSen54_N"/>
</dbReference>
<dbReference type="PANTHER" id="PTHR21027">
    <property type="entry name" value="TRNA-SPLICING ENDONUCLEASE SUBUNIT SEN54"/>
    <property type="match status" value="1"/>
</dbReference>
<dbReference type="PANTHER" id="PTHR21027:SF1">
    <property type="entry name" value="TRNA-SPLICING ENDONUCLEASE SUBUNIT SEN54"/>
    <property type="match status" value="1"/>
</dbReference>
<dbReference type="Pfam" id="PF12928">
    <property type="entry name" value="tRNA_int_end_N2"/>
    <property type="match status" value="1"/>
</dbReference>
<feature type="chain" id="PRO_0000194033" description="Probable tRNA-splicing endonuclease subunit sen54">
    <location>
        <begin position="1"/>
        <end position="384"/>
    </location>
</feature>
<feature type="region of interest" description="Disordered" evidence="2">
    <location>
        <begin position="37"/>
        <end position="57"/>
    </location>
</feature>
<feature type="compositionally biased region" description="Basic and acidic residues" evidence="2">
    <location>
        <begin position="45"/>
        <end position="55"/>
    </location>
</feature>
<comment type="function">
    <text evidence="1">Non-catalytic subunit of the tRNA-splicing endonuclease complex, a complex responsible for identification and cleavage of the splice sites in pre-tRNA. It cleaves pre-tRNA at the 5' and 3' splice sites to release the intron. The products are an intron and two tRNA half-molecules bearing 2',3' cyclic phosphate and 5'-OH termini. There are no conserved sequences at the splice sites, but the intron is invariably located at the same site in the gene, placing the splice sites an invariant distance from the constant structural features of the tRNA body. May be required to embody the molecular ruler of the complex (By similarity).</text>
</comment>
<comment type="subunit">
    <text evidence="1">tRNA splicing endonuclease is a heterotetramer composed of sen2, sen15, sen34 and sen54. Interacts directly with sen2 (By similarity).</text>
</comment>
<comment type="similarity">
    <text evidence="3">Belongs to the SEN54 family.</text>
</comment>
<organism>
    <name type="scientific">Schizosaccharomyces pombe (strain 972 / ATCC 24843)</name>
    <name type="common">Fission yeast</name>
    <dbReference type="NCBI Taxonomy" id="284812"/>
    <lineage>
        <taxon>Eukaryota</taxon>
        <taxon>Fungi</taxon>
        <taxon>Dikarya</taxon>
        <taxon>Ascomycota</taxon>
        <taxon>Taphrinomycotina</taxon>
        <taxon>Schizosaccharomycetes</taxon>
        <taxon>Schizosaccharomycetales</taxon>
        <taxon>Schizosaccharomycetaceae</taxon>
        <taxon>Schizosaccharomyces</taxon>
    </lineage>
</organism>
<protein>
    <recommendedName>
        <fullName>Probable tRNA-splicing endonuclease subunit sen54</fullName>
    </recommendedName>
    <alternativeName>
        <fullName>tRNA-intron endonuclease sen54</fullName>
    </alternativeName>
</protein>